<sequence length="232" mass="25316">MAHGVPFDHNYYIVECKEETNAEAQAGAMAATSTEEAPGAVEVAQAAVASSHDSGGAIGCATVKESESDSESESDSESESDSSDSSDESDDDSSTSDEDTSDPEEAAAPSVAAVAAAAAPPTVPAAAAIQIPGPYRYRPPRRHVRRRRRGPPFHFAQWQVEEMESLFEETQYPDLLTRGELARTLNVPEVKVKVWFTNRRAKQRKIERREMLRNIPPGAEDFIFITDFEEPS</sequence>
<evidence type="ECO:0000255" key="1">
    <source>
        <dbReference type="PROSITE-ProRule" id="PRU00108"/>
    </source>
</evidence>
<evidence type="ECO:0000255" key="2">
    <source>
        <dbReference type="RuleBase" id="RU000682"/>
    </source>
</evidence>
<evidence type="ECO:0000256" key="3">
    <source>
        <dbReference type="SAM" id="MobiDB-lite"/>
    </source>
</evidence>
<evidence type="ECO:0000269" key="4">
    <source>
    </source>
</evidence>
<evidence type="ECO:0000305" key="5"/>
<evidence type="ECO:0000312" key="6">
    <source>
        <dbReference type="EMBL" id="AL512346"/>
    </source>
</evidence>
<evidence type="ECO:0000312" key="7">
    <source>
        <dbReference type="EMBL" id="BAC25170.1"/>
    </source>
</evidence>
<evidence type="ECO:0000312" key="8">
    <source>
        <dbReference type="MGI" id="MGI:1920864"/>
    </source>
</evidence>
<evidence type="ECO:0000312" key="9">
    <source>
        <dbReference type="Proteomes" id="UP000000589"/>
    </source>
</evidence>
<comment type="function">
    <text evidence="5">Probable transcription factor.</text>
</comment>
<comment type="subcellular location">
    <subcellularLocation>
        <location evidence="2 4">Nucleus</location>
    </subcellularLocation>
</comment>
<comment type="developmental stage">
    <text evidence="4">In adult testis, expressed in differentiating spermatagonia and preleptotene spermatocytes, but not during other stages of spermatogenesis (at protein level). Detected in testis from 13.5 days post coitum (dpc) onwards. Detected in ovary from 13.5 dpc, but levels gradually decline and are undetectable by 3 days post partum (dpp).</text>
</comment>
<comment type="similarity">
    <text evidence="5">Belongs to the paired-like homeobox family.</text>
</comment>
<keyword id="KW-0238">DNA-binding</keyword>
<keyword id="KW-0371">Homeobox</keyword>
<keyword id="KW-0539">Nucleus</keyword>
<keyword id="KW-1185">Reference proteome</keyword>
<keyword id="KW-0804">Transcription</keyword>
<keyword id="KW-0805">Transcription regulation</keyword>
<reference evidence="5" key="1">
    <citation type="journal article" date="2008" name="Gene">
        <title>Identification and characterization of Rhox13, a novel X-linked mouse homeobox gene.</title>
        <authorList>
            <person name="Geyer C.B."/>
            <person name="Eddy E.M."/>
        </authorList>
    </citation>
    <scope>NUCLEOTIDE SEQUENCE [MRNA]</scope>
    <scope>SUBCELLULAR LOCATION</scope>
    <scope>DEVELOPMENTAL STAGE</scope>
</reference>
<reference evidence="6" key="2">
    <citation type="journal article" date="2009" name="PLoS Biol.">
        <title>Lineage-specific biology revealed by a finished genome assembly of the mouse.</title>
        <authorList>
            <person name="Church D.M."/>
            <person name="Goodstadt L."/>
            <person name="Hillier L.W."/>
            <person name="Zody M.C."/>
            <person name="Goldstein S."/>
            <person name="She X."/>
            <person name="Bult C.J."/>
            <person name="Agarwala R."/>
            <person name="Cherry J.L."/>
            <person name="DiCuccio M."/>
            <person name="Hlavina W."/>
            <person name="Kapustin Y."/>
            <person name="Meric P."/>
            <person name="Maglott D."/>
            <person name="Birtle Z."/>
            <person name="Marques A.C."/>
            <person name="Graves T."/>
            <person name="Zhou S."/>
            <person name="Teague B."/>
            <person name="Potamousis K."/>
            <person name="Churas C."/>
            <person name="Place M."/>
            <person name="Herschleb J."/>
            <person name="Runnheim R."/>
            <person name="Forrest D."/>
            <person name="Amos-Landgraf J."/>
            <person name="Schwartz D.C."/>
            <person name="Cheng Z."/>
            <person name="Lindblad-Toh K."/>
            <person name="Eichler E.E."/>
            <person name="Ponting C.P."/>
        </authorList>
    </citation>
    <scope>NUCLEOTIDE SEQUENCE [LARGE SCALE GENOMIC DNA]</scope>
    <source>
        <strain evidence="6">C57BL/6J</strain>
    </source>
</reference>
<reference evidence="5" key="3">
    <citation type="journal article" date="2005" name="Science">
        <title>The transcriptional landscape of the mammalian genome.</title>
        <authorList>
            <person name="Carninci P."/>
            <person name="Kasukawa T."/>
            <person name="Katayama S."/>
            <person name="Gough J."/>
            <person name="Frith M.C."/>
            <person name="Maeda N."/>
            <person name="Oyama R."/>
            <person name="Ravasi T."/>
            <person name="Lenhard B."/>
            <person name="Wells C."/>
            <person name="Kodzius R."/>
            <person name="Shimokawa K."/>
            <person name="Bajic V.B."/>
            <person name="Brenner S.E."/>
            <person name="Batalov S."/>
            <person name="Forrest A.R."/>
            <person name="Zavolan M."/>
            <person name="Davis M.J."/>
            <person name="Wilming L.G."/>
            <person name="Aidinis V."/>
            <person name="Allen J.E."/>
            <person name="Ambesi-Impiombato A."/>
            <person name="Apweiler R."/>
            <person name="Aturaliya R.N."/>
            <person name="Bailey T.L."/>
            <person name="Bansal M."/>
            <person name="Baxter L."/>
            <person name="Beisel K.W."/>
            <person name="Bersano T."/>
            <person name="Bono H."/>
            <person name="Chalk A.M."/>
            <person name="Chiu K.P."/>
            <person name="Choudhary V."/>
            <person name="Christoffels A."/>
            <person name="Clutterbuck D.R."/>
            <person name="Crowe M.L."/>
            <person name="Dalla E."/>
            <person name="Dalrymple B.P."/>
            <person name="de Bono B."/>
            <person name="Della Gatta G."/>
            <person name="di Bernardo D."/>
            <person name="Down T."/>
            <person name="Engstrom P."/>
            <person name="Fagiolini M."/>
            <person name="Faulkner G."/>
            <person name="Fletcher C.F."/>
            <person name="Fukushima T."/>
            <person name="Furuno M."/>
            <person name="Futaki S."/>
            <person name="Gariboldi M."/>
            <person name="Georgii-Hemming P."/>
            <person name="Gingeras T.R."/>
            <person name="Gojobori T."/>
            <person name="Green R.E."/>
            <person name="Gustincich S."/>
            <person name="Harbers M."/>
            <person name="Hayashi Y."/>
            <person name="Hensch T.K."/>
            <person name="Hirokawa N."/>
            <person name="Hill D."/>
            <person name="Huminiecki L."/>
            <person name="Iacono M."/>
            <person name="Ikeo K."/>
            <person name="Iwama A."/>
            <person name="Ishikawa T."/>
            <person name="Jakt M."/>
            <person name="Kanapin A."/>
            <person name="Katoh M."/>
            <person name="Kawasawa Y."/>
            <person name="Kelso J."/>
            <person name="Kitamura H."/>
            <person name="Kitano H."/>
            <person name="Kollias G."/>
            <person name="Krishnan S.P."/>
            <person name="Kruger A."/>
            <person name="Kummerfeld S.K."/>
            <person name="Kurochkin I.V."/>
            <person name="Lareau L.F."/>
            <person name="Lazarevic D."/>
            <person name="Lipovich L."/>
            <person name="Liu J."/>
            <person name="Liuni S."/>
            <person name="McWilliam S."/>
            <person name="Madan Babu M."/>
            <person name="Madera M."/>
            <person name="Marchionni L."/>
            <person name="Matsuda H."/>
            <person name="Matsuzawa S."/>
            <person name="Miki H."/>
            <person name="Mignone F."/>
            <person name="Miyake S."/>
            <person name="Morris K."/>
            <person name="Mottagui-Tabar S."/>
            <person name="Mulder N."/>
            <person name="Nakano N."/>
            <person name="Nakauchi H."/>
            <person name="Ng P."/>
            <person name="Nilsson R."/>
            <person name="Nishiguchi S."/>
            <person name="Nishikawa S."/>
            <person name="Nori F."/>
            <person name="Ohara O."/>
            <person name="Okazaki Y."/>
            <person name="Orlando V."/>
            <person name="Pang K.C."/>
            <person name="Pavan W.J."/>
            <person name="Pavesi G."/>
            <person name="Pesole G."/>
            <person name="Petrovsky N."/>
            <person name="Piazza S."/>
            <person name="Reed J."/>
            <person name="Reid J.F."/>
            <person name="Ring B.Z."/>
            <person name="Ringwald M."/>
            <person name="Rost B."/>
            <person name="Ruan Y."/>
            <person name="Salzberg S.L."/>
            <person name="Sandelin A."/>
            <person name="Schneider C."/>
            <person name="Schoenbach C."/>
            <person name="Sekiguchi K."/>
            <person name="Semple C.A."/>
            <person name="Seno S."/>
            <person name="Sessa L."/>
            <person name="Sheng Y."/>
            <person name="Shibata Y."/>
            <person name="Shimada H."/>
            <person name="Shimada K."/>
            <person name="Silva D."/>
            <person name="Sinclair B."/>
            <person name="Sperling S."/>
            <person name="Stupka E."/>
            <person name="Sugiura K."/>
            <person name="Sultana R."/>
            <person name="Takenaka Y."/>
            <person name="Taki K."/>
            <person name="Tammoja K."/>
            <person name="Tan S.L."/>
            <person name="Tang S."/>
            <person name="Taylor M.S."/>
            <person name="Tegner J."/>
            <person name="Teichmann S.A."/>
            <person name="Ueda H.R."/>
            <person name="van Nimwegen E."/>
            <person name="Verardo R."/>
            <person name="Wei C.L."/>
            <person name="Yagi K."/>
            <person name="Yamanishi H."/>
            <person name="Zabarovsky E."/>
            <person name="Zhu S."/>
            <person name="Zimmer A."/>
            <person name="Hide W."/>
            <person name="Bult C."/>
            <person name="Grimmond S.M."/>
            <person name="Teasdale R.D."/>
            <person name="Liu E.T."/>
            <person name="Brusic V."/>
            <person name="Quackenbush J."/>
            <person name="Wahlestedt C."/>
            <person name="Mattick J.S."/>
            <person name="Hume D.A."/>
            <person name="Kai C."/>
            <person name="Sasaki D."/>
            <person name="Tomaru Y."/>
            <person name="Fukuda S."/>
            <person name="Kanamori-Katayama M."/>
            <person name="Suzuki M."/>
            <person name="Aoki J."/>
            <person name="Arakawa T."/>
            <person name="Iida J."/>
            <person name="Imamura K."/>
            <person name="Itoh M."/>
            <person name="Kato T."/>
            <person name="Kawaji H."/>
            <person name="Kawagashira N."/>
            <person name="Kawashima T."/>
            <person name="Kojima M."/>
            <person name="Kondo S."/>
            <person name="Konno H."/>
            <person name="Nakano K."/>
            <person name="Ninomiya N."/>
            <person name="Nishio T."/>
            <person name="Okada M."/>
            <person name="Plessy C."/>
            <person name="Shibata K."/>
            <person name="Shiraki T."/>
            <person name="Suzuki S."/>
            <person name="Tagami M."/>
            <person name="Waki K."/>
            <person name="Watahiki A."/>
            <person name="Okamura-Oho Y."/>
            <person name="Suzuki H."/>
            <person name="Kawai J."/>
            <person name="Hayashizaki Y."/>
        </authorList>
    </citation>
    <scope>NUCLEOTIDE SEQUENCE [LARGE SCALE MRNA] OF 137-232</scope>
    <source>
        <strain evidence="7">C57BL/6J</strain>
        <tissue evidence="7">Testis</tissue>
    </source>
</reference>
<name>RHX13_MOUSE</name>
<dbReference type="EMBL" id="AL512346">
    <property type="status" value="NOT_ANNOTATED_CDS"/>
    <property type="molecule type" value="Genomic_DNA"/>
</dbReference>
<dbReference type="EMBL" id="AK007253">
    <property type="protein sequence ID" value="BAC25170.1"/>
    <property type="molecule type" value="mRNA"/>
</dbReference>
<dbReference type="CCDS" id="CCDS57754.1"/>
<dbReference type="RefSeq" id="NP_001171931.1">
    <property type="nucleotide sequence ID" value="NM_001185002.2"/>
</dbReference>
<dbReference type="SMR" id="F6YCR7"/>
<dbReference type="FunCoup" id="F6YCR7">
    <property type="interactions" value="70"/>
</dbReference>
<dbReference type="STRING" id="10090.ENSMUSP00000117271"/>
<dbReference type="PaxDb" id="10090-ENSMUSP00000117271"/>
<dbReference type="ProteomicsDB" id="253282"/>
<dbReference type="Antibodypedia" id="29868">
    <property type="antibodies" value="138 antibodies from 25 providers"/>
</dbReference>
<dbReference type="Ensembl" id="ENSMUST00000152730.4">
    <property type="protein sequence ID" value="ENSMUSP00000117271.3"/>
    <property type="gene ID" value="ENSMUSG00000050197.6"/>
</dbReference>
<dbReference type="GeneID" id="73614"/>
<dbReference type="KEGG" id="mmu:73614"/>
<dbReference type="UCSC" id="uc009szo.2">
    <property type="organism name" value="mouse"/>
</dbReference>
<dbReference type="AGR" id="MGI:1920864"/>
<dbReference type="CTD" id="73614"/>
<dbReference type="MGI" id="MGI:1920864">
    <property type="gene designation" value="Rhox13"/>
</dbReference>
<dbReference type="VEuPathDB" id="HostDB:ENSMUSG00000050197"/>
<dbReference type="eggNOG" id="KOG0490">
    <property type="taxonomic scope" value="Eukaryota"/>
</dbReference>
<dbReference type="GeneTree" id="ENSGT00940000163385"/>
<dbReference type="HOGENOM" id="CLU_1194575_0_0_1"/>
<dbReference type="InParanoid" id="F6YCR7"/>
<dbReference type="OMA" id="IRQMCKE"/>
<dbReference type="OrthoDB" id="9634605at2759"/>
<dbReference type="PhylomeDB" id="F6YCR7"/>
<dbReference type="BioGRID-ORCS" id="73614">
    <property type="hits" value="3 hits in 76 CRISPR screens"/>
</dbReference>
<dbReference type="PRO" id="PR:F6YCR7"/>
<dbReference type="Proteomes" id="UP000000589">
    <property type="component" value="Chromosome X"/>
</dbReference>
<dbReference type="RNAct" id="F6YCR7">
    <property type="molecule type" value="protein"/>
</dbReference>
<dbReference type="Bgee" id="ENSMUSG00000050197">
    <property type="expression patterns" value="Expressed in mesodermal cell in embryo and 15 other cell types or tissues"/>
</dbReference>
<dbReference type="GO" id="GO:0005634">
    <property type="term" value="C:nucleus"/>
    <property type="evidence" value="ECO:0000314"/>
    <property type="project" value="MGI"/>
</dbReference>
<dbReference type="GO" id="GO:0003677">
    <property type="term" value="F:DNA binding"/>
    <property type="evidence" value="ECO:0007669"/>
    <property type="project" value="UniProtKB-KW"/>
</dbReference>
<dbReference type="GO" id="GO:0000981">
    <property type="term" value="F:DNA-binding transcription factor activity, RNA polymerase II-specific"/>
    <property type="evidence" value="ECO:0007669"/>
    <property type="project" value="InterPro"/>
</dbReference>
<dbReference type="GO" id="GO:0071300">
    <property type="term" value="P:cellular response to retinoic acid"/>
    <property type="evidence" value="ECO:0000314"/>
    <property type="project" value="MGI"/>
</dbReference>
<dbReference type="CDD" id="cd00086">
    <property type="entry name" value="homeodomain"/>
    <property type="match status" value="1"/>
</dbReference>
<dbReference type="FunFam" id="1.10.10.60:FF:000580">
    <property type="entry name" value="Reproductive homeobox on X chromosome 11"/>
    <property type="match status" value="1"/>
</dbReference>
<dbReference type="Gene3D" id="1.10.10.60">
    <property type="entry name" value="Homeodomain-like"/>
    <property type="match status" value="1"/>
</dbReference>
<dbReference type="InterPro" id="IPR001356">
    <property type="entry name" value="HD"/>
</dbReference>
<dbReference type="InterPro" id="IPR017970">
    <property type="entry name" value="Homeobox_CS"/>
</dbReference>
<dbReference type="InterPro" id="IPR009057">
    <property type="entry name" value="Homeodomain-like_sf"/>
</dbReference>
<dbReference type="InterPro" id="IPR050649">
    <property type="entry name" value="Paired_Homeobox_TFs"/>
</dbReference>
<dbReference type="PANTHER" id="PTHR24329">
    <property type="entry name" value="HOMEOBOX PROTEIN ARISTALESS"/>
    <property type="match status" value="1"/>
</dbReference>
<dbReference type="PANTHER" id="PTHR24329:SF557">
    <property type="entry name" value="HOMEOBOX PROTEIN RHOX13"/>
    <property type="match status" value="1"/>
</dbReference>
<dbReference type="Pfam" id="PF00046">
    <property type="entry name" value="Homeodomain"/>
    <property type="match status" value="1"/>
</dbReference>
<dbReference type="SMART" id="SM00389">
    <property type="entry name" value="HOX"/>
    <property type="match status" value="1"/>
</dbReference>
<dbReference type="SUPFAM" id="SSF46689">
    <property type="entry name" value="Homeodomain-like"/>
    <property type="match status" value="1"/>
</dbReference>
<dbReference type="PROSITE" id="PS00027">
    <property type="entry name" value="HOMEOBOX_1"/>
    <property type="match status" value="1"/>
</dbReference>
<dbReference type="PROSITE" id="PS50071">
    <property type="entry name" value="HOMEOBOX_2"/>
    <property type="match status" value="1"/>
</dbReference>
<feature type="chain" id="PRO_0000435030" description="Homeobox protein Rhox13">
    <location>
        <begin position="1"/>
        <end position="232"/>
    </location>
</feature>
<feature type="DNA-binding region" description="Homeobox" evidence="1">
    <location>
        <begin position="148"/>
        <end position="207"/>
    </location>
</feature>
<feature type="region of interest" description="Disordered" evidence="3">
    <location>
        <begin position="45"/>
        <end position="114"/>
    </location>
</feature>
<feature type="compositionally biased region" description="Acidic residues" evidence="3">
    <location>
        <begin position="68"/>
        <end position="105"/>
    </location>
</feature>
<feature type="sequence conflict" description="In Ref. 3; BAC25170." evidence="5" ref="3">
    <original>Y</original>
    <variation>D</variation>
    <location>
        <position position="137"/>
    </location>
</feature>
<proteinExistence type="evidence at protein level"/>
<protein>
    <recommendedName>
        <fullName evidence="5">Homeobox protein Rhox13</fullName>
    </recommendedName>
    <alternativeName>
        <fullName evidence="8">Reproductive homeobox protein 13</fullName>
    </alternativeName>
</protein>
<gene>
    <name evidence="8" type="primary">Rhox13</name>
</gene>
<organism evidence="9">
    <name type="scientific">Mus musculus</name>
    <name type="common">Mouse</name>
    <dbReference type="NCBI Taxonomy" id="10090"/>
    <lineage>
        <taxon>Eukaryota</taxon>
        <taxon>Metazoa</taxon>
        <taxon>Chordata</taxon>
        <taxon>Craniata</taxon>
        <taxon>Vertebrata</taxon>
        <taxon>Euteleostomi</taxon>
        <taxon>Mammalia</taxon>
        <taxon>Eutheria</taxon>
        <taxon>Euarchontoglires</taxon>
        <taxon>Glires</taxon>
        <taxon>Rodentia</taxon>
        <taxon>Myomorpha</taxon>
        <taxon>Muroidea</taxon>
        <taxon>Muridae</taxon>
        <taxon>Murinae</taxon>
        <taxon>Mus</taxon>
        <taxon>Mus</taxon>
    </lineage>
</organism>
<accession>F6YCR7</accession>
<accession>Q8C1Q7</accession>